<accession>Q8TTH3</accession>
<reference key="1">
    <citation type="journal article" date="2002" name="Genome Res.">
        <title>The genome of Methanosarcina acetivorans reveals extensive metabolic and physiological diversity.</title>
        <authorList>
            <person name="Galagan J.E."/>
            <person name="Nusbaum C."/>
            <person name="Roy A."/>
            <person name="Endrizzi M.G."/>
            <person name="Macdonald P."/>
            <person name="FitzHugh W."/>
            <person name="Calvo S."/>
            <person name="Engels R."/>
            <person name="Smirnov S."/>
            <person name="Atnoor D."/>
            <person name="Brown A."/>
            <person name="Allen N."/>
            <person name="Naylor J."/>
            <person name="Stange-Thomann N."/>
            <person name="DeArellano K."/>
            <person name="Johnson R."/>
            <person name="Linton L."/>
            <person name="McEwan P."/>
            <person name="McKernan K."/>
            <person name="Talamas J."/>
            <person name="Tirrell A."/>
            <person name="Ye W."/>
            <person name="Zimmer A."/>
            <person name="Barber R.D."/>
            <person name="Cann I."/>
            <person name="Graham D.E."/>
            <person name="Grahame D.A."/>
            <person name="Guss A.M."/>
            <person name="Hedderich R."/>
            <person name="Ingram-Smith C."/>
            <person name="Kuettner H.C."/>
            <person name="Krzycki J.A."/>
            <person name="Leigh J.A."/>
            <person name="Li W."/>
            <person name="Liu J."/>
            <person name="Mukhopadhyay B."/>
            <person name="Reeve J.N."/>
            <person name="Smith K."/>
            <person name="Springer T.A."/>
            <person name="Umayam L.A."/>
            <person name="White O."/>
            <person name="White R.H."/>
            <person name="de Macario E.C."/>
            <person name="Ferry J.G."/>
            <person name="Jarrell K.F."/>
            <person name="Jing H."/>
            <person name="Macario A.J.L."/>
            <person name="Paulsen I.T."/>
            <person name="Pritchett M."/>
            <person name="Sowers K.R."/>
            <person name="Swanson R.V."/>
            <person name="Zinder S.H."/>
            <person name="Lander E."/>
            <person name="Metcalf W.W."/>
            <person name="Birren B."/>
        </authorList>
    </citation>
    <scope>NUCLEOTIDE SEQUENCE [LARGE SCALE GENOMIC DNA]</scope>
    <source>
        <strain>ATCC 35395 / DSM 2834 / JCM 12185 / C2A</strain>
    </source>
</reference>
<reference key="2">
    <citation type="journal article" date="2011" name="J. Biol. Chem.">
        <title>New family of deamination repair enzymes in uracil-DNA glycosylase superfamily.</title>
        <authorList>
            <person name="Lee H.W."/>
            <person name="Dominy B.N."/>
            <person name="Cao W."/>
        </authorList>
    </citation>
    <scope>FUNCTION</scope>
    <scope>CATALYTIC ACTIVITY</scope>
</reference>
<reference evidence="6" key="3">
    <citation type="submission" date="2010-09" db="PDB data bank">
        <title>Solution NMR structure of a putative uracil DNA glycosylase from Methanosarcina acetivorans, Northeast structural genomics consortium target mvr76.</title>
        <authorList>
            <person name="Aramini J.M."/>
            <person name="Hamilton K."/>
            <person name="Ciccosanti C.T."/>
            <person name="Wang H."/>
            <person name="Lee H.W."/>
            <person name="Rost B."/>
            <person name="Acton T.B."/>
            <person name="Xiao R."/>
            <person name="Everett J.K."/>
            <person name="Montelione G.T."/>
        </authorList>
    </citation>
    <scope>STRUCTURE BY NMR</scope>
</reference>
<sequence length="158" mass="18051">MIKRGFPAVLDENTEILILGSLPSDESIRKQQYYGNPGNDFWRLVGHAIGENLQDMAYEKKLKTLKHNRIGLWDVFKAGSREGSQDSKIGDEEINDFSGLKEMVPKLRLICFNGRKAGEYEPLLRGMGYETKVLPSSSGANRRFSKNRESEWEAVFRH</sequence>
<comment type="function">
    <text evidence="2">Excises hypoxanthine, a deamination product of adenine, from double-stranded DNA. Acts on double-stranded DNA containing G/I, T/I, A/I and C/I base pairs, but not on single-stranded inosine-containing DNA. Also has minor xanthine DNA glycosylase activity. Lacks any detectable uracil-DNA glycosylase activity.</text>
</comment>
<comment type="similarity">
    <text evidence="4">Belongs to the uracil-DNA glycosylase (UDG) superfamily. Type 6 (HDG) family.</text>
</comment>
<keyword id="KW-0002">3D-structure</keyword>
<keyword id="KW-0227">DNA damage</keyword>
<keyword id="KW-0234">DNA repair</keyword>
<keyword id="KW-0378">Hydrolase</keyword>
<keyword id="KW-1185">Reference proteome</keyword>
<feature type="chain" id="PRO_0000439189" description="Hypoxanthine DNA glycosylase">
    <location>
        <begin position="1"/>
        <end position="158"/>
    </location>
</feature>
<feature type="active site" evidence="1">
    <location>
        <position position="39"/>
    </location>
</feature>
<feature type="strand" evidence="7">
    <location>
        <begin position="15"/>
        <end position="22"/>
    </location>
</feature>
<feature type="helix" evidence="7">
    <location>
        <begin position="25"/>
        <end position="30"/>
    </location>
</feature>
<feature type="helix" evidence="7">
    <location>
        <begin position="33"/>
        <end position="35"/>
    </location>
</feature>
<feature type="helix" evidence="7">
    <location>
        <begin position="41"/>
        <end position="49"/>
    </location>
</feature>
<feature type="helix" evidence="7">
    <location>
        <begin position="58"/>
        <end position="67"/>
    </location>
</feature>
<feature type="strand" evidence="7">
    <location>
        <begin position="70"/>
        <end position="79"/>
    </location>
</feature>
<feature type="strand" evidence="7">
    <location>
        <begin position="83"/>
        <end position="86"/>
    </location>
</feature>
<feature type="helix" evidence="7">
    <location>
        <begin position="100"/>
        <end position="103"/>
    </location>
</feature>
<feature type="strand" evidence="7">
    <location>
        <begin position="109"/>
        <end position="114"/>
    </location>
</feature>
<feature type="helix" evidence="7">
    <location>
        <begin position="115"/>
        <end position="118"/>
    </location>
</feature>
<feature type="helix" evidence="7">
    <location>
        <begin position="121"/>
        <end position="124"/>
    </location>
</feature>
<feature type="helix" evidence="7">
    <location>
        <begin position="125"/>
        <end position="127"/>
    </location>
</feature>
<feature type="strand" evidence="7">
    <location>
        <begin position="130"/>
        <end position="134"/>
    </location>
</feature>
<feature type="helix" evidence="7">
    <location>
        <begin position="139"/>
        <end position="142"/>
    </location>
</feature>
<feature type="helix" evidence="7">
    <location>
        <begin position="149"/>
        <end position="156"/>
    </location>
</feature>
<protein>
    <recommendedName>
        <fullName evidence="3">Hypoxanthine DNA glycosylase</fullName>
        <shortName evidence="3">HDG</shortName>
        <ecNumber evidence="2">3.2.2.-</ecNumber>
    </recommendedName>
</protein>
<proteinExistence type="evidence at protein level"/>
<dbReference type="EC" id="3.2.2.-" evidence="2"/>
<dbReference type="EMBL" id="AE010299">
    <property type="protein sequence ID" value="AAM03908.1"/>
    <property type="molecule type" value="Genomic_DNA"/>
</dbReference>
<dbReference type="RefSeq" id="WP_011020513.1">
    <property type="nucleotide sequence ID" value="NC_003552.1"/>
</dbReference>
<dbReference type="PDB" id="2L3F">
    <property type="method" value="NMR"/>
    <property type="chains" value="A=1-158"/>
</dbReference>
<dbReference type="PDBsum" id="2L3F"/>
<dbReference type="SMR" id="Q8TTH3"/>
<dbReference type="STRING" id="188937.MA_0462"/>
<dbReference type="DNASU" id="1472354"/>
<dbReference type="EnsemblBacteria" id="AAM03908">
    <property type="protein sequence ID" value="AAM03908"/>
    <property type="gene ID" value="MA_0462"/>
</dbReference>
<dbReference type="GeneID" id="1472354"/>
<dbReference type="KEGG" id="mac:MA_0462"/>
<dbReference type="HOGENOM" id="CLU_094865_0_1_2"/>
<dbReference type="InParanoid" id="Q8TTH3"/>
<dbReference type="OrthoDB" id="134618at2157"/>
<dbReference type="PhylomeDB" id="Q8TTH3"/>
<dbReference type="EvolutionaryTrace" id="Q8TTH3"/>
<dbReference type="Proteomes" id="UP000002487">
    <property type="component" value="Chromosome"/>
</dbReference>
<dbReference type="GO" id="GO:0097507">
    <property type="term" value="F:hypoxanthine DNA N-glycosylase activity"/>
    <property type="evidence" value="ECO:0000314"/>
    <property type="project" value="UniProtKB"/>
</dbReference>
<dbReference type="GO" id="GO:0006281">
    <property type="term" value="P:DNA repair"/>
    <property type="evidence" value="ECO:0000314"/>
    <property type="project" value="UniProtKB"/>
</dbReference>
<dbReference type="CDD" id="cd10032">
    <property type="entry name" value="UDG-F6_HDG"/>
    <property type="match status" value="1"/>
</dbReference>
<dbReference type="Gene3D" id="3.40.470.10">
    <property type="entry name" value="Uracil-DNA glycosylase-like domain"/>
    <property type="match status" value="1"/>
</dbReference>
<dbReference type="InterPro" id="IPR026353">
    <property type="entry name" value="Hypoxan-DNA_Glyclase"/>
</dbReference>
<dbReference type="InterPro" id="IPR005122">
    <property type="entry name" value="Uracil-DNA_glycosylase-like"/>
</dbReference>
<dbReference type="InterPro" id="IPR036895">
    <property type="entry name" value="Uracil-DNA_glycosylase-like_sf"/>
</dbReference>
<dbReference type="NCBIfam" id="TIGR04274">
    <property type="entry name" value="hypoxanDNAglyco"/>
    <property type="match status" value="1"/>
</dbReference>
<dbReference type="Pfam" id="PF03167">
    <property type="entry name" value="UDG"/>
    <property type="match status" value="1"/>
</dbReference>
<dbReference type="SMART" id="SM00986">
    <property type="entry name" value="UDG"/>
    <property type="match status" value="1"/>
</dbReference>
<dbReference type="SMART" id="SM00987">
    <property type="entry name" value="UreE_C"/>
    <property type="match status" value="1"/>
</dbReference>
<dbReference type="SUPFAM" id="SSF52141">
    <property type="entry name" value="Uracil-DNA glycosylase-like"/>
    <property type="match status" value="1"/>
</dbReference>
<gene>
    <name evidence="5" type="ordered locus">MA_0462</name>
</gene>
<evidence type="ECO:0000250" key="1">
    <source>
        <dbReference type="UniProtKB" id="Q46EH7"/>
    </source>
</evidence>
<evidence type="ECO:0000269" key="2">
    <source>
    </source>
</evidence>
<evidence type="ECO:0000303" key="3">
    <source>
    </source>
</evidence>
<evidence type="ECO:0000305" key="4"/>
<evidence type="ECO:0000312" key="5">
    <source>
        <dbReference type="EMBL" id="AAM03908.1"/>
    </source>
</evidence>
<evidence type="ECO:0007744" key="6">
    <source>
        <dbReference type="PDB" id="2L3F"/>
    </source>
</evidence>
<evidence type="ECO:0007829" key="7">
    <source>
        <dbReference type="PDB" id="2L3F"/>
    </source>
</evidence>
<organism>
    <name type="scientific">Methanosarcina acetivorans (strain ATCC 35395 / DSM 2834 / JCM 12185 / C2A)</name>
    <dbReference type="NCBI Taxonomy" id="188937"/>
    <lineage>
        <taxon>Archaea</taxon>
        <taxon>Methanobacteriati</taxon>
        <taxon>Methanobacteriota</taxon>
        <taxon>Stenosarchaea group</taxon>
        <taxon>Methanomicrobia</taxon>
        <taxon>Methanosarcinales</taxon>
        <taxon>Methanosarcinaceae</taxon>
        <taxon>Methanosarcina</taxon>
    </lineage>
</organism>
<name>HDG_METAC</name>